<feature type="chain" id="PRO_1000188161" description="Small ribosomal subunit biogenesis GTPase RsgA">
    <location>
        <begin position="1"/>
        <end position="350"/>
    </location>
</feature>
<feature type="domain" description="CP-type G" evidence="2">
    <location>
        <begin position="103"/>
        <end position="273"/>
    </location>
</feature>
<feature type="region of interest" description="Disordered" evidence="3">
    <location>
        <begin position="1"/>
        <end position="35"/>
    </location>
</feature>
<feature type="compositionally biased region" description="Polar residues" evidence="3">
    <location>
        <begin position="1"/>
        <end position="17"/>
    </location>
</feature>
<feature type="binding site" evidence="1">
    <location>
        <begin position="159"/>
        <end position="162"/>
    </location>
    <ligand>
        <name>GTP</name>
        <dbReference type="ChEBI" id="CHEBI:37565"/>
    </ligand>
</feature>
<feature type="binding site" evidence="1">
    <location>
        <begin position="213"/>
        <end position="221"/>
    </location>
    <ligand>
        <name>GTP</name>
        <dbReference type="ChEBI" id="CHEBI:37565"/>
    </ligand>
</feature>
<feature type="binding site" evidence="1">
    <location>
        <position position="297"/>
    </location>
    <ligand>
        <name>Zn(2+)</name>
        <dbReference type="ChEBI" id="CHEBI:29105"/>
    </ligand>
</feature>
<feature type="binding site" evidence="1">
    <location>
        <position position="302"/>
    </location>
    <ligand>
        <name>Zn(2+)</name>
        <dbReference type="ChEBI" id="CHEBI:29105"/>
    </ligand>
</feature>
<feature type="binding site" evidence="1">
    <location>
        <position position="304"/>
    </location>
    <ligand>
        <name>Zn(2+)</name>
        <dbReference type="ChEBI" id="CHEBI:29105"/>
    </ligand>
</feature>
<feature type="binding site" evidence="1">
    <location>
        <position position="310"/>
    </location>
    <ligand>
        <name>Zn(2+)</name>
        <dbReference type="ChEBI" id="CHEBI:29105"/>
    </ligand>
</feature>
<proteinExistence type="inferred from homology"/>
<comment type="function">
    <text evidence="1">One of several proteins that assist in the late maturation steps of the functional core of the 30S ribosomal subunit. Helps release RbfA from mature subunits. May play a role in the assembly of ribosomal proteins into the subunit. Circularly permuted GTPase that catalyzes slow GTP hydrolysis, GTPase activity is stimulated by the 30S ribosomal subunit.</text>
</comment>
<comment type="cofactor">
    <cofactor evidence="1">
        <name>Zn(2+)</name>
        <dbReference type="ChEBI" id="CHEBI:29105"/>
    </cofactor>
    <text evidence="1">Binds 1 zinc ion per subunit.</text>
</comment>
<comment type="subunit">
    <text evidence="1">Monomer. Associates with 30S ribosomal subunit, binds 16S rRNA.</text>
</comment>
<comment type="subcellular location">
    <subcellularLocation>
        <location evidence="1">Cytoplasm</location>
    </subcellularLocation>
</comment>
<comment type="similarity">
    <text evidence="1">Belongs to the TRAFAC class YlqF/YawG GTPase family. RsgA subfamily.</text>
</comment>
<evidence type="ECO:0000255" key="1">
    <source>
        <dbReference type="HAMAP-Rule" id="MF_01820"/>
    </source>
</evidence>
<evidence type="ECO:0000255" key="2">
    <source>
        <dbReference type="PROSITE-ProRule" id="PRU01058"/>
    </source>
</evidence>
<evidence type="ECO:0000256" key="3">
    <source>
        <dbReference type="SAM" id="MobiDB-lite"/>
    </source>
</evidence>
<organism>
    <name type="scientific">Yersinia pestis bv. Antiqua (strain Nepal516)</name>
    <dbReference type="NCBI Taxonomy" id="377628"/>
    <lineage>
        <taxon>Bacteria</taxon>
        <taxon>Pseudomonadati</taxon>
        <taxon>Pseudomonadota</taxon>
        <taxon>Gammaproteobacteria</taxon>
        <taxon>Enterobacterales</taxon>
        <taxon>Yersiniaceae</taxon>
        <taxon>Yersinia</taxon>
    </lineage>
</organism>
<accession>Q1CEE7</accession>
<keyword id="KW-0963">Cytoplasm</keyword>
<keyword id="KW-0342">GTP-binding</keyword>
<keyword id="KW-0378">Hydrolase</keyword>
<keyword id="KW-0479">Metal-binding</keyword>
<keyword id="KW-0547">Nucleotide-binding</keyword>
<keyword id="KW-0690">Ribosome biogenesis</keyword>
<keyword id="KW-0694">RNA-binding</keyword>
<keyword id="KW-0699">rRNA-binding</keyword>
<keyword id="KW-0862">Zinc</keyword>
<reference key="1">
    <citation type="journal article" date="2006" name="J. Bacteriol.">
        <title>Complete genome sequence of Yersinia pestis strains Antiqua and Nepal516: evidence of gene reduction in an emerging pathogen.</title>
        <authorList>
            <person name="Chain P.S.G."/>
            <person name="Hu P."/>
            <person name="Malfatti S.A."/>
            <person name="Radnedge L."/>
            <person name="Larimer F."/>
            <person name="Vergez L.M."/>
            <person name="Worsham P."/>
            <person name="Chu M.C."/>
            <person name="Andersen G.L."/>
        </authorList>
    </citation>
    <scope>NUCLEOTIDE SEQUENCE [LARGE SCALE GENOMIC DNA]</scope>
    <source>
        <strain>Nepal516</strain>
    </source>
</reference>
<reference key="2">
    <citation type="submission" date="2009-04" db="EMBL/GenBank/DDBJ databases">
        <title>Yersinia pestis Nepal516A whole genome shotgun sequencing project.</title>
        <authorList>
            <person name="Plunkett G. III"/>
            <person name="Anderson B.D."/>
            <person name="Baumler D.J."/>
            <person name="Burland V."/>
            <person name="Cabot E.L."/>
            <person name="Glasner J.D."/>
            <person name="Mau B."/>
            <person name="Neeno-Eckwall E."/>
            <person name="Perna N.T."/>
            <person name="Munk A.C."/>
            <person name="Tapia R."/>
            <person name="Green L.D."/>
            <person name="Rogers Y.C."/>
            <person name="Detter J.C."/>
            <person name="Bruce D.C."/>
            <person name="Brettin T.S."/>
        </authorList>
    </citation>
    <scope>NUCLEOTIDE SEQUENCE [LARGE SCALE GENOMIC DNA]</scope>
    <source>
        <strain>Nepal516</strain>
    </source>
</reference>
<gene>
    <name evidence="1" type="primary">rsgA</name>
    <name type="ordered locus">YPN_3306</name>
    <name type="ORF">YP516_3758</name>
</gene>
<name>RSGA_YERPN</name>
<dbReference type="EC" id="3.6.1.-" evidence="1"/>
<dbReference type="EMBL" id="CP000305">
    <property type="protein sequence ID" value="ABG19633.1"/>
    <property type="molecule type" value="Genomic_DNA"/>
</dbReference>
<dbReference type="EMBL" id="ACNQ01000017">
    <property type="protein sequence ID" value="EEO75820.1"/>
    <property type="molecule type" value="Genomic_DNA"/>
</dbReference>
<dbReference type="RefSeq" id="WP_002209142.1">
    <property type="nucleotide sequence ID" value="NZ_ACNQ01000017.1"/>
</dbReference>
<dbReference type="SMR" id="Q1CEE7"/>
<dbReference type="GeneID" id="57974243"/>
<dbReference type="KEGG" id="ypn:YPN_3306"/>
<dbReference type="HOGENOM" id="CLU_033617_2_0_6"/>
<dbReference type="Proteomes" id="UP000008936">
    <property type="component" value="Chromosome"/>
</dbReference>
<dbReference type="GO" id="GO:0005737">
    <property type="term" value="C:cytoplasm"/>
    <property type="evidence" value="ECO:0007669"/>
    <property type="project" value="UniProtKB-SubCell"/>
</dbReference>
<dbReference type="GO" id="GO:0005525">
    <property type="term" value="F:GTP binding"/>
    <property type="evidence" value="ECO:0007669"/>
    <property type="project" value="UniProtKB-UniRule"/>
</dbReference>
<dbReference type="GO" id="GO:0003924">
    <property type="term" value="F:GTPase activity"/>
    <property type="evidence" value="ECO:0007669"/>
    <property type="project" value="UniProtKB-UniRule"/>
</dbReference>
<dbReference type="GO" id="GO:0046872">
    <property type="term" value="F:metal ion binding"/>
    <property type="evidence" value="ECO:0007669"/>
    <property type="project" value="UniProtKB-KW"/>
</dbReference>
<dbReference type="GO" id="GO:0019843">
    <property type="term" value="F:rRNA binding"/>
    <property type="evidence" value="ECO:0007669"/>
    <property type="project" value="UniProtKB-KW"/>
</dbReference>
<dbReference type="GO" id="GO:0042274">
    <property type="term" value="P:ribosomal small subunit biogenesis"/>
    <property type="evidence" value="ECO:0007669"/>
    <property type="project" value="UniProtKB-UniRule"/>
</dbReference>
<dbReference type="CDD" id="cd01854">
    <property type="entry name" value="YjeQ_EngC"/>
    <property type="match status" value="1"/>
</dbReference>
<dbReference type="Gene3D" id="2.40.50.140">
    <property type="entry name" value="Nucleic acid-binding proteins"/>
    <property type="match status" value="1"/>
</dbReference>
<dbReference type="Gene3D" id="3.40.50.300">
    <property type="entry name" value="P-loop containing nucleotide triphosphate hydrolases"/>
    <property type="match status" value="1"/>
</dbReference>
<dbReference type="Gene3D" id="1.10.40.50">
    <property type="entry name" value="Probable gtpase engc, domain 3"/>
    <property type="match status" value="1"/>
</dbReference>
<dbReference type="HAMAP" id="MF_01820">
    <property type="entry name" value="GTPase_RsgA"/>
    <property type="match status" value="1"/>
</dbReference>
<dbReference type="InterPro" id="IPR030378">
    <property type="entry name" value="G_CP_dom"/>
</dbReference>
<dbReference type="InterPro" id="IPR012340">
    <property type="entry name" value="NA-bd_OB-fold"/>
</dbReference>
<dbReference type="InterPro" id="IPR027417">
    <property type="entry name" value="P-loop_NTPase"/>
</dbReference>
<dbReference type="InterPro" id="IPR004881">
    <property type="entry name" value="Ribosome_biogen_GTPase_RsgA"/>
</dbReference>
<dbReference type="InterPro" id="IPR010914">
    <property type="entry name" value="RsgA_GTPase_dom"/>
</dbReference>
<dbReference type="NCBIfam" id="NF008931">
    <property type="entry name" value="PRK12288.1"/>
    <property type="match status" value="1"/>
</dbReference>
<dbReference type="NCBIfam" id="TIGR00157">
    <property type="entry name" value="ribosome small subunit-dependent GTPase A"/>
    <property type="match status" value="1"/>
</dbReference>
<dbReference type="PANTHER" id="PTHR32120">
    <property type="entry name" value="SMALL RIBOSOMAL SUBUNIT BIOGENESIS GTPASE RSGA"/>
    <property type="match status" value="1"/>
</dbReference>
<dbReference type="PANTHER" id="PTHR32120:SF11">
    <property type="entry name" value="SMALL RIBOSOMAL SUBUNIT BIOGENESIS GTPASE RSGA 1, MITOCHONDRIAL-RELATED"/>
    <property type="match status" value="1"/>
</dbReference>
<dbReference type="Pfam" id="PF03193">
    <property type="entry name" value="RsgA_GTPase"/>
    <property type="match status" value="1"/>
</dbReference>
<dbReference type="SUPFAM" id="SSF52540">
    <property type="entry name" value="P-loop containing nucleoside triphosphate hydrolases"/>
    <property type="match status" value="1"/>
</dbReference>
<dbReference type="PROSITE" id="PS50936">
    <property type="entry name" value="ENGC_GTPASE"/>
    <property type="match status" value="1"/>
</dbReference>
<dbReference type="PROSITE" id="PS51721">
    <property type="entry name" value="G_CP"/>
    <property type="match status" value="1"/>
</dbReference>
<sequence>MSKNKLSKGQQRRVQANHQRRLRTDRKPELDDSQLGDAQEGIVISRFGQHADVEAVDGTQHRCNIRRTIKSLVTGDRVVWRPGLQAQEGVRVKGIVEAVHERTSVLTRPDLYDGVKPIAANIDQIVIVSAILPELSLNIIDRYLVACETLEVEPLIVLNKIDLLDADGRKFVDGMMDIYRRIGYDVLEVSSQTREGMEAFENALTGRISIFAGQSGVGKSSLLNALLPPTDNEILVNTVSGNSGLGQHTTTAARLYHFQHGGDVIDSPGVREFGLWHLAPEQITQGFVEFRDYLGHCKFRDCSHTNDPGCALREAVEQGKIAEERFDNYHRILESMEQAKPRKTSDSDEK</sequence>
<protein>
    <recommendedName>
        <fullName evidence="1">Small ribosomal subunit biogenesis GTPase RsgA</fullName>
        <ecNumber evidence="1">3.6.1.-</ecNumber>
    </recommendedName>
</protein>